<sequence>MKLKFWREVAIDIISDFETTIMPFFGNPDGGKLVKISPSGDETKLVDKLAEDLILSRITELGVNVVSEEVGVIDNESEYTVIVDPLDGSYNFIAGIPFFALSLAVFKKDKPIYAIIYEPMTERFFEGIPGEGAFLNGKRIKVRKTPDEKPSISFYSRGKGHEIVKHVKRTRTLGAIALELAYLAMGALDGVVDVRKYVRPTDIAAGTIIAKEAGALIKDSAGKDIDISFNATDRLDVIAVNSEELLKTILSLLE</sequence>
<evidence type="ECO:0000250" key="1">
    <source>
        <dbReference type="UniProtKB" id="Q57573"/>
    </source>
</evidence>
<evidence type="ECO:0000269" key="2">
    <source>
    </source>
</evidence>
<evidence type="ECO:0000303" key="3">
    <source>
    </source>
</evidence>
<evidence type="ECO:0000305" key="4"/>
<evidence type="ECO:0000305" key="5">
    <source>
    </source>
</evidence>
<evidence type="ECO:0000312" key="6">
    <source>
        <dbReference type="EMBL" id="AAL82138.1"/>
    </source>
</evidence>
<evidence type="ECO:0000312" key="7">
    <source>
        <dbReference type="EMBL" id="AAM48105.1"/>
    </source>
</evidence>
<evidence type="ECO:0007744" key="8">
    <source>
        <dbReference type="PDB" id="1XI6"/>
    </source>
</evidence>
<evidence type="ECO:0007829" key="9">
    <source>
        <dbReference type="PDB" id="1XI6"/>
    </source>
</evidence>
<dbReference type="EC" id="3.1.3.11" evidence="2"/>
<dbReference type="EMBL" id="AF453319">
    <property type="protein sequence ID" value="AAM48105.1"/>
    <property type="molecule type" value="Genomic_DNA"/>
</dbReference>
<dbReference type="EMBL" id="AE009950">
    <property type="protein sequence ID" value="AAL82138.1"/>
    <property type="molecule type" value="Genomic_DNA"/>
</dbReference>
<dbReference type="RefSeq" id="WP_011013159.1">
    <property type="nucleotide sequence ID" value="NZ_CP023154.1"/>
</dbReference>
<dbReference type="PDB" id="1XI6">
    <property type="method" value="X-ray"/>
    <property type="resolution" value="2.80 A"/>
    <property type="chains" value="A=2-254"/>
</dbReference>
<dbReference type="PDBsum" id="1XI6"/>
<dbReference type="SMR" id="Q8TZH9"/>
<dbReference type="STRING" id="186497.PF2014"/>
<dbReference type="PaxDb" id="186497-PF2014"/>
<dbReference type="KEGG" id="pfu:PF2014"/>
<dbReference type="PATRIC" id="fig|186497.12.peg.2091"/>
<dbReference type="eggNOG" id="arCOG01349">
    <property type="taxonomic scope" value="Archaea"/>
</dbReference>
<dbReference type="HOGENOM" id="CLU_044118_5_0_2"/>
<dbReference type="OrthoDB" id="58111at2157"/>
<dbReference type="PhylomeDB" id="Q8TZH9"/>
<dbReference type="BRENDA" id="3.1.3.11">
    <property type="organism ID" value="5243"/>
</dbReference>
<dbReference type="EvolutionaryTrace" id="Q8TZH9"/>
<dbReference type="Proteomes" id="UP000001013">
    <property type="component" value="Chromosome"/>
</dbReference>
<dbReference type="GO" id="GO:0042132">
    <property type="term" value="F:fructose 1,6-bisphosphate 1-phosphatase activity"/>
    <property type="evidence" value="ECO:0007669"/>
    <property type="project" value="UniProtKB-EC"/>
</dbReference>
<dbReference type="GO" id="GO:0008934">
    <property type="term" value="F:inositol monophosphate 1-phosphatase activity"/>
    <property type="evidence" value="ECO:0007669"/>
    <property type="project" value="TreeGrafter"/>
</dbReference>
<dbReference type="GO" id="GO:0046872">
    <property type="term" value="F:metal ion binding"/>
    <property type="evidence" value="ECO:0007669"/>
    <property type="project" value="UniProtKB-KW"/>
</dbReference>
<dbReference type="GO" id="GO:0006020">
    <property type="term" value="P:inositol metabolic process"/>
    <property type="evidence" value="ECO:0007669"/>
    <property type="project" value="TreeGrafter"/>
</dbReference>
<dbReference type="GO" id="GO:0007165">
    <property type="term" value="P:signal transduction"/>
    <property type="evidence" value="ECO:0007669"/>
    <property type="project" value="TreeGrafter"/>
</dbReference>
<dbReference type="CDD" id="cd01515">
    <property type="entry name" value="Arch_FBPase_1"/>
    <property type="match status" value="1"/>
</dbReference>
<dbReference type="FunFam" id="3.30.540.10:FF:000027">
    <property type="entry name" value="Fructose-1,6-bisphosphatase/inositol-1-monophosphatase"/>
    <property type="match status" value="1"/>
</dbReference>
<dbReference type="FunFam" id="3.40.190.80:FF:000020">
    <property type="entry name" value="Fructose-1,6-bisphosphatase/inositol-1-monophosphatase"/>
    <property type="match status" value="1"/>
</dbReference>
<dbReference type="Gene3D" id="3.40.190.80">
    <property type="match status" value="1"/>
</dbReference>
<dbReference type="Gene3D" id="3.30.540.10">
    <property type="entry name" value="Fructose-1,6-Bisphosphatase, subunit A, domain 1"/>
    <property type="match status" value="1"/>
</dbReference>
<dbReference type="InterPro" id="IPR000760">
    <property type="entry name" value="Inositol_monophosphatase-like"/>
</dbReference>
<dbReference type="NCBIfam" id="NF009321">
    <property type="entry name" value="PRK12676.1"/>
    <property type="match status" value="1"/>
</dbReference>
<dbReference type="PANTHER" id="PTHR20854">
    <property type="entry name" value="INOSITOL MONOPHOSPHATASE"/>
    <property type="match status" value="1"/>
</dbReference>
<dbReference type="PANTHER" id="PTHR20854:SF4">
    <property type="entry name" value="INOSITOL-1-MONOPHOSPHATASE-RELATED"/>
    <property type="match status" value="1"/>
</dbReference>
<dbReference type="Pfam" id="PF00459">
    <property type="entry name" value="Inositol_P"/>
    <property type="match status" value="1"/>
</dbReference>
<dbReference type="PRINTS" id="PR00377">
    <property type="entry name" value="IMPHPHTASES"/>
</dbReference>
<dbReference type="SUPFAM" id="SSF56655">
    <property type="entry name" value="Carbohydrate phosphatase"/>
    <property type="match status" value="1"/>
</dbReference>
<reference key="1">
    <citation type="journal article" date="2002" name="J. Bacteriol.">
        <title>Molecular and biochemical characterization of a distinct type of fructose-1,6-bisphosphatase from Pyrococcus furiosus.</title>
        <authorList>
            <person name="Verhees C.H."/>
            <person name="Akerboom J."/>
            <person name="Schiltz E."/>
            <person name="de Vos W.M."/>
            <person name="van der Oost J."/>
        </authorList>
    </citation>
    <scope>NUCLEOTIDE SEQUENCE [GENOMIC DNA]</scope>
    <scope>PROTEIN SEQUENCE OF 1-24</scope>
    <scope>FUNCTION</scope>
    <scope>CATALYTIC ACTIVITY</scope>
    <scope>COFACTOR</scope>
    <scope>ACTIVITY REGULATION</scope>
    <scope>BIOPHYSICOCHEMICAL PROPERTIES</scope>
    <scope>SUBUNIT</scope>
    <source>
        <strain>ATCC 43587 / DSM 3638 / JCM 8422 / Vc1</strain>
    </source>
</reference>
<reference key="2">
    <citation type="journal article" date="1999" name="Genetics">
        <title>Divergence of the hyperthermophilic archaea Pyrococcus furiosus and P. horikoshii inferred from complete genomic sequences.</title>
        <authorList>
            <person name="Maeder D.L."/>
            <person name="Weiss R.B."/>
            <person name="Dunn D.M."/>
            <person name="Cherry J.L."/>
            <person name="Gonzalez J.M."/>
            <person name="DiRuggiero J."/>
            <person name="Robb F.T."/>
        </authorList>
    </citation>
    <scope>NUCLEOTIDE SEQUENCE [LARGE SCALE GENOMIC DNA]</scope>
    <source>
        <strain>ATCC 43587 / DSM 3638 / JCM 8422 / Vc1</strain>
    </source>
</reference>
<reference evidence="8" key="3">
    <citation type="submission" date="2004-09" db="PDB data bank">
        <title>Extragenic suppressor from Pyrococcus furiosus Pfu-1862794-001.</title>
        <authorList>
            <consortium name="Southeast collaboratory for structural genomics (SECSG)"/>
            <person name="Zhao M."/>
            <person name="Chang J.C."/>
            <person name="Zhou W."/>
            <person name="Chen L."/>
            <person name="Horanyi P."/>
            <person name="Xu H."/>
            <person name="Yang H."/>
            <person name="Liu Z.-J."/>
            <person name="Habel J.E."/>
            <person name="Lee D."/>
            <person name="Chang S.-H."/>
            <person name="Rose J.P."/>
            <person name="Wang B.-C."/>
        </authorList>
    </citation>
    <scope>X-RAY CRYSTALLOGRAPHY (2.80 ANGSTROMS) OF 2-254</scope>
</reference>
<accession>Q8TZH9</accession>
<accession>E7FHX0</accession>
<accession>Q7LWG3</accession>
<proteinExistence type="evidence at protein level"/>
<feature type="chain" id="PRO_0000442420" description="Fructose-1,6-bisphosphatase">
    <location>
        <begin position="1"/>
        <end position="254"/>
    </location>
</feature>
<feature type="binding site" evidence="1">
    <location>
        <position position="68"/>
    </location>
    <ligand>
        <name>Mg(2+)</name>
        <dbReference type="ChEBI" id="CHEBI:18420"/>
        <label>1</label>
    </ligand>
</feature>
<feature type="binding site" evidence="1">
    <location>
        <position position="84"/>
    </location>
    <ligand>
        <name>Mg(2+)</name>
        <dbReference type="ChEBI" id="CHEBI:18420"/>
        <label>1</label>
    </ligand>
</feature>
<feature type="binding site" evidence="1">
    <location>
        <position position="84"/>
    </location>
    <ligand>
        <name>Mg(2+)</name>
        <dbReference type="ChEBI" id="CHEBI:18420"/>
        <label>2</label>
    </ligand>
</feature>
<feature type="binding site" evidence="1">
    <location>
        <position position="86"/>
    </location>
    <ligand>
        <name>Mg(2+)</name>
        <dbReference type="ChEBI" id="CHEBI:18420"/>
        <label>1</label>
    </ligand>
</feature>
<feature type="binding site" evidence="1">
    <location>
        <begin position="87"/>
        <end position="89"/>
    </location>
    <ligand>
        <name>substrate</name>
    </ligand>
</feature>
<feature type="binding site" evidence="1">
    <location>
        <position position="87"/>
    </location>
    <ligand>
        <name>Mg(2+)</name>
        <dbReference type="ChEBI" id="CHEBI:18420"/>
        <label>2</label>
    </ligand>
</feature>
<feature type="binding site" evidence="1">
    <location>
        <position position="171"/>
    </location>
    <ligand>
        <name>substrate</name>
    </ligand>
</feature>
<feature type="binding site" evidence="1">
    <location>
        <position position="176"/>
    </location>
    <ligand>
        <name>substrate</name>
    </ligand>
</feature>
<feature type="binding site" evidence="1">
    <location>
        <position position="195"/>
    </location>
    <ligand>
        <name>substrate</name>
    </ligand>
</feature>
<feature type="binding site" evidence="1">
    <location>
        <position position="202"/>
    </location>
    <ligand>
        <name>Mg(2+)</name>
        <dbReference type="ChEBI" id="CHEBI:18420"/>
        <label>2</label>
    </ligand>
</feature>
<feature type="helix" evidence="9">
    <location>
        <begin position="3"/>
        <end position="20"/>
    </location>
</feature>
<feature type="helix" evidence="9">
    <location>
        <begin position="22"/>
        <end position="24"/>
    </location>
</feature>
<feature type="helix" evidence="9">
    <location>
        <begin position="28"/>
        <end position="31"/>
    </location>
</feature>
<feature type="helix" evidence="9">
    <location>
        <begin position="45"/>
        <end position="58"/>
    </location>
</feature>
<feature type="helix" evidence="9">
    <location>
        <begin position="59"/>
        <end position="61"/>
    </location>
</feature>
<feature type="strand" evidence="9">
    <location>
        <begin position="64"/>
        <end position="67"/>
    </location>
</feature>
<feature type="turn" evidence="9">
    <location>
        <begin position="68"/>
        <end position="70"/>
    </location>
</feature>
<feature type="strand" evidence="9">
    <location>
        <begin position="71"/>
        <end position="73"/>
    </location>
</feature>
<feature type="strand" evidence="9">
    <location>
        <begin position="78"/>
        <end position="88"/>
    </location>
</feature>
<feature type="helix" evidence="9">
    <location>
        <begin position="89"/>
        <end position="94"/>
    </location>
</feature>
<feature type="strand" evidence="9">
    <location>
        <begin position="100"/>
        <end position="107"/>
    </location>
</feature>
<feature type="strand" evidence="9">
    <location>
        <begin position="110"/>
        <end position="118"/>
    </location>
</feature>
<feature type="turn" evidence="9">
    <location>
        <begin position="119"/>
        <end position="122"/>
    </location>
</feature>
<feature type="strand" evidence="9">
    <location>
        <begin position="123"/>
        <end position="128"/>
    </location>
</feature>
<feature type="turn" evidence="9">
    <location>
        <begin position="129"/>
        <end position="131"/>
    </location>
</feature>
<feature type="strand" evidence="9">
    <location>
        <begin position="132"/>
        <end position="135"/>
    </location>
</feature>
<feature type="strand" evidence="9">
    <location>
        <begin position="152"/>
        <end position="155"/>
    </location>
</feature>
<feature type="strand" evidence="9">
    <location>
        <begin position="157"/>
        <end position="159"/>
    </location>
</feature>
<feature type="strand" evidence="9">
    <location>
        <begin position="161"/>
        <end position="163"/>
    </location>
</feature>
<feature type="helix" evidence="9">
    <location>
        <begin position="164"/>
        <end position="166"/>
    </location>
</feature>
<feature type="helix" evidence="9">
    <location>
        <begin position="176"/>
        <end position="185"/>
    </location>
</feature>
<feature type="strand" evidence="9">
    <location>
        <begin position="189"/>
        <end position="198"/>
    </location>
</feature>
<feature type="helix" evidence="9">
    <location>
        <begin position="200"/>
        <end position="211"/>
    </location>
</feature>
<feature type="turn" evidence="9">
    <location>
        <begin position="212"/>
        <end position="214"/>
    </location>
</feature>
<feature type="strand" evidence="9">
    <location>
        <begin position="216"/>
        <end position="218"/>
    </location>
</feature>
<feature type="strand" evidence="9">
    <location>
        <begin position="220"/>
        <end position="224"/>
    </location>
</feature>
<feature type="strand" evidence="9">
    <location>
        <begin position="235"/>
        <end position="241"/>
    </location>
</feature>
<feature type="helix" evidence="9">
    <location>
        <begin position="243"/>
        <end position="249"/>
    </location>
</feature>
<comment type="function">
    <text evidence="2">Catalyzes the conversion of D-fructose 1,6-bisphosphate to D-fructose 6-phosphate. In vitro, also has weak activity with inositol-1-phosphate, glucose-1-phosphate and glycerol-2-phosphate.</text>
</comment>
<comment type="catalytic activity">
    <reaction evidence="2">
        <text>beta-D-fructose 1,6-bisphosphate + H2O = beta-D-fructose 6-phosphate + phosphate</text>
        <dbReference type="Rhea" id="RHEA:11064"/>
        <dbReference type="ChEBI" id="CHEBI:15377"/>
        <dbReference type="ChEBI" id="CHEBI:32966"/>
        <dbReference type="ChEBI" id="CHEBI:43474"/>
        <dbReference type="ChEBI" id="CHEBI:57634"/>
        <dbReference type="EC" id="3.1.3.11"/>
    </reaction>
</comment>
<comment type="cofactor">
    <cofactor evidence="2">
        <name>Mg(2+)</name>
        <dbReference type="ChEBI" id="CHEBI:18420"/>
    </cofactor>
</comment>
<comment type="activity regulation">
    <text evidence="2">Inhibited by Li(+), ADP, ATP and glucose-6-phosphate.</text>
</comment>
<comment type="biophysicochemical properties">
    <kinetics>
        <KM evidence="2">0.32 mM for fructose 1,6-bisphosphate (at 85 degrees Celsius)</KM>
        <KM evidence="2">0.31 mM for fructose 1,6-bisphosphate (at 50 degrees Celsius)</KM>
        <Vmax evidence="2">12.2 umol/min/mg enzyme (at 85 degrees Celsius)</Vmax>
        <Vmax evidence="2">0.72 umol/min/mg enzyme (at 50 degrees Celsius)</Vmax>
    </kinetics>
    <temperatureDependence>
        <text evidence="2">Optimum temperature is approximately 100 degrees Celsius.</text>
    </temperatureDependence>
</comment>
<comment type="subunit">
    <text evidence="2">Homodimer.</text>
</comment>
<comment type="similarity">
    <text evidence="5">Belongs to the inositol monophosphatase superfamily. FBPase class 4 family.</text>
</comment>
<gene>
    <name evidence="3" type="primary">fbpA</name>
    <name evidence="7" type="synonym">fbp</name>
    <name evidence="6" type="ordered locus">PF2014</name>
</gene>
<protein>
    <recommendedName>
        <fullName evidence="3">Fructose-1,6-bisphosphatase</fullName>
        <shortName evidence="4">FBPase</shortName>
        <ecNumber evidence="2">3.1.3.11</ecNumber>
    </recommendedName>
</protein>
<name>FBP_PYRFU</name>
<keyword id="KW-0002">3D-structure</keyword>
<keyword id="KW-0119">Carbohydrate metabolism</keyword>
<keyword id="KW-0903">Direct protein sequencing</keyword>
<keyword id="KW-0378">Hydrolase</keyword>
<keyword id="KW-0460">Magnesium</keyword>
<keyword id="KW-0479">Metal-binding</keyword>
<keyword id="KW-1185">Reference proteome</keyword>
<organism>
    <name type="scientific">Pyrococcus furiosus (strain ATCC 43587 / DSM 3638 / JCM 8422 / Vc1)</name>
    <dbReference type="NCBI Taxonomy" id="186497"/>
    <lineage>
        <taxon>Archaea</taxon>
        <taxon>Methanobacteriati</taxon>
        <taxon>Methanobacteriota</taxon>
        <taxon>Thermococci</taxon>
        <taxon>Thermococcales</taxon>
        <taxon>Thermococcaceae</taxon>
        <taxon>Pyrococcus</taxon>
    </lineage>
</organism>